<keyword id="KW-0002">3D-structure</keyword>
<keyword id="KW-0028">Amino-acid biosynthesis</keyword>
<keyword id="KW-0057">Aromatic amino acid biosynthesis</keyword>
<keyword id="KW-0521">NADP</keyword>
<keyword id="KW-0560">Oxidoreductase</keyword>
<keyword id="KW-1185">Reference proteome</keyword>
<dbReference type="EC" id="1.1.1.25" evidence="1"/>
<dbReference type="EMBL" id="L77117">
    <property type="protein sequence ID" value="AAB99086.1"/>
    <property type="molecule type" value="Genomic_DNA"/>
</dbReference>
<dbReference type="PIR" id="C64435">
    <property type="entry name" value="C64435"/>
</dbReference>
<dbReference type="RefSeq" id="WP_010870596.1">
    <property type="nucleotide sequence ID" value="NC_000909.1"/>
</dbReference>
<dbReference type="PDB" id="1NVT">
    <property type="method" value="X-ray"/>
    <property type="resolution" value="2.35 A"/>
    <property type="chains" value="A/B=1-282"/>
</dbReference>
<dbReference type="PDBsum" id="1NVT"/>
<dbReference type="SMR" id="Q58484"/>
<dbReference type="FunCoup" id="Q58484">
    <property type="interactions" value="96"/>
</dbReference>
<dbReference type="STRING" id="243232.MJ_1084"/>
<dbReference type="PaxDb" id="243232-MJ_1084"/>
<dbReference type="EnsemblBacteria" id="AAB99086">
    <property type="protein sequence ID" value="AAB99086"/>
    <property type="gene ID" value="MJ_1084"/>
</dbReference>
<dbReference type="GeneID" id="1451980"/>
<dbReference type="KEGG" id="mja:MJ_1084"/>
<dbReference type="eggNOG" id="arCOG01033">
    <property type="taxonomic scope" value="Archaea"/>
</dbReference>
<dbReference type="HOGENOM" id="CLU_044063_4_1_2"/>
<dbReference type="InParanoid" id="Q58484"/>
<dbReference type="OrthoDB" id="8744at2157"/>
<dbReference type="PhylomeDB" id="Q58484"/>
<dbReference type="BioCyc" id="MetaCyc:MONOMER-18802"/>
<dbReference type="BRENDA" id="1.1.1.25">
    <property type="organism ID" value="3260"/>
</dbReference>
<dbReference type="UniPathway" id="UPA00053">
    <property type="reaction ID" value="UER00087"/>
</dbReference>
<dbReference type="EvolutionaryTrace" id="Q58484"/>
<dbReference type="Proteomes" id="UP000000805">
    <property type="component" value="Chromosome"/>
</dbReference>
<dbReference type="GO" id="GO:0050661">
    <property type="term" value="F:NADP binding"/>
    <property type="evidence" value="ECO:0007669"/>
    <property type="project" value="InterPro"/>
</dbReference>
<dbReference type="GO" id="GO:0004764">
    <property type="term" value="F:shikimate 3-dehydrogenase (NADP+) activity"/>
    <property type="evidence" value="ECO:0000318"/>
    <property type="project" value="GO_Central"/>
</dbReference>
<dbReference type="GO" id="GO:0008652">
    <property type="term" value="P:amino acid biosynthetic process"/>
    <property type="evidence" value="ECO:0007669"/>
    <property type="project" value="UniProtKB-KW"/>
</dbReference>
<dbReference type="GO" id="GO:0009073">
    <property type="term" value="P:aromatic amino acid family biosynthetic process"/>
    <property type="evidence" value="ECO:0007669"/>
    <property type="project" value="UniProtKB-KW"/>
</dbReference>
<dbReference type="GO" id="GO:0009423">
    <property type="term" value="P:chorismate biosynthetic process"/>
    <property type="evidence" value="ECO:0000318"/>
    <property type="project" value="GO_Central"/>
</dbReference>
<dbReference type="GO" id="GO:0019632">
    <property type="term" value="P:shikimate metabolic process"/>
    <property type="evidence" value="ECO:0000318"/>
    <property type="project" value="GO_Central"/>
</dbReference>
<dbReference type="CDD" id="cd01065">
    <property type="entry name" value="NAD_bind_Shikimate_DH"/>
    <property type="match status" value="1"/>
</dbReference>
<dbReference type="FunFam" id="3.40.50.10860:FF:000004">
    <property type="entry name" value="Quinate/shikimate dehydrogenase"/>
    <property type="match status" value="1"/>
</dbReference>
<dbReference type="FunFam" id="3.40.50.720:FF:000086">
    <property type="entry name" value="Quinate/shikimate dehydrogenase"/>
    <property type="match status" value="1"/>
</dbReference>
<dbReference type="Gene3D" id="3.40.50.10860">
    <property type="entry name" value="Leucine Dehydrogenase, chain A, domain 1"/>
    <property type="match status" value="1"/>
</dbReference>
<dbReference type="Gene3D" id="3.40.50.720">
    <property type="entry name" value="NAD(P)-binding Rossmann-like Domain"/>
    <property type="match status" value="1"/>
</dbReference>
<dbReference type="HAMAP" id="MF_00222">
    <property type="entry name" value="Shikimate_DH_AroE"/>
    <property type="match status" value="1"/>
</dbReference>
<dbReference type="InterPro" id="IPR046346">
    <property type="entry name" value="Aminoacid_DH-like_N_sf"/>
</dbReference>
<dbReference type="InterPro" id="IPR036291">
    <property type="entry name" value="NAD(P)-bd_dom_sf"/>
</dbReference>
<dbReference type="InterPro" id="IPR041121">
    <property type="entry name" value="SDH_C"/>
</dbReference>
<dbReference type="InterPro" id="IPR011342">
    <property type="entry name" value="Shikimate_DH"/>
</dbReference>
<dbReference type="InterPro" id="IPR013708">
    <property type="entry name" value="Shikimate_DH-bd_N"/>
</dbReference>
<dbReference type="InterPro" id="IPR022893">
    <property type="entry name" value="Shikimate_DH_fam"/>
</dbReference>
<dbReference type="InterPro" id="IPR006151">
    <property type="entry name" value="Shikm_DH/Glu-tRNA_Rdtase"/>
</dbReference>
<dbReference type="NCBIfam" id="TIGR00507">
    <property type="entry name" value="aroE"/>
    <property type="match status" value="1"/>
</dbReference>
<dbReference type="NCBIfam" id="NF001314">
    <property type="entry name" value="PRK00258.2-2"/>
    <property type="match status" value="1"/>
</dbReference>
<dbReference type="NCBIfam" id="NF001319">
    <property type="entry name" value="PRK00258.3-3"/>
    <property type="match status" value="1"/>
</dbReference>
<dbReference type="PANTHER" id="PTHR21089:SF1">
    <property type="entry name" value="BIFUNCTIONAL 3-DEHYDROQUINATE DEHYDRATASE_SHIKIMATE DEHYDROGENASE, CHLOROPLASTIC"/>
    <property type="match status" value="1"/>
</dbReference>
<dbReference type="PANTHER" id="PTHR21089">
    <property type="entry name" value="SHIKIMATE DEHYDROGENASE"/>
    <property type="match status" value="1"/>
</dbReference>
<dbReference type="Pfam" id="PF18317">
    <property type="entry name" value="SDH_C"/>
    <property type="match status" value="1"/>
</dbReference>
<dbReference type="Pfam" id="PF01488">
    <property type="entry name" value="Shikimate_DH"/>
    <property type="match status" value="1"/>
</dbReference>
<dbReference type="Pfam" id="PF08501">
    <property type="entry name" value="Shikimate_dh_N"/>
    <property type="match status" value="1"/>
</dbReference>
<dbReference type="SUPFAM" id="SSF53223">
    <property type="entry name" value="Aminoacid dehydrogenase-like, N-terminal domain"/>
    <property type="match status" value="1"/>
</dbReference>
<dbReference type="SUPFAM" id="SSF51735">
    <property type="entry name" value="NAD(P)-binding Rossmann-fold domains"/>
    <property type="match status" value="1"/>
</dbReference>
<protein>
    <recommendedName>
        <fullName evidence="1">Shikimate dehydrogenase (NADP(+))</fullName>
        <shortName evidence="1">SDH</shortName>
        <ecNumber evidence="1">1.1.1.25</ecNumber>
    </recommendedName>
</protein>
<reference key="1">
    <citation type="journal article" date="1996" name="Science">
        <title>Complete genome sequence of the methanogenic archaeon, Methanococcus jannaschii.</title>
        <authorList>
            <person name="Bult C.J."/>
            <person name="White O."/>
            <person name="Olsen G.J."/>
            <person name="Zhou L."/>
            <person name="Fleischmann R.D."/>
            <person name="Sutton G.G."/>
            <person name="Blake J.A."/>
            <person name="FitzGerald L.M."/>
            <person name="Clayton R.A."/>
            <person name="Gocayne J.D."/>
            <person name="Kerlavage A.R."/>
            <person name="Dougherty B.A."/>
            <person name="Tomb J.-F."/>
            <person name="Adams M.D."/>
            <person name="Reich C.I."/>
            <person name="Overbeek R."/>
            <person name="Kirkness E.F."/>
            <person name="Weinstock K.G."/>
            <person name="Merrick J.M."/>
            <person name="Glodek A."/>
            <person name="Scott J.L."/>
            <person name="Geoghagen N.S.M."/>
            <person name="Weidman J.F."/>
            <person name="Fuhrmann J.L."/>
            <person name="Nguyen D."/>
            <person name="Utterback T.R."/>
            <person name="Kelley J.M."/>
            <person name="Peterson J.D."/>
            <person name="Sadow P.W."/>
            <person name="Hanna M.C."/>
            <person name="Cotton M.D."/>
            <person name="Roberts K.M."/>
            <person name="Hurst M.A."/>
            <person name="Kaine B.P."/>
            <person name="Borodovsky M."/>
            <person name="Klenk H.-P."/>
            <person name="Fraser C.M."/>
            <person name="Smith H.O."/>
            <person name="Woese C.R."/>
            <person name="Venter J.C."/>
        </authorList>
    </citation>
    <scope>NUCLEOTIDE SEQUENCE [LARGE SCALE GENOMIC DNA]</scope>
    <source>
        <strain>ATCC 43067 / DSM 2661 / JAL-1 / JCM 10045 / NBRC 100440</strain>
    </source>
</reference>
<reference key="2">
    <citation type="journal article" date="2003" name="Structure">
        <title>Crystal structure of shikimate 5-dehydrogenase (SDH) bound to NADP: insights into function and evolution.</title>
        <authorList>
            <person name="Padyana A.K."/>
            <person name="Burley S.K."/>
        </authorList>
    </citation>
    <scope>X-RAY CRYSTALLOGRAPHY (2.35 ANGSTROMS) IN COMPLEX WITH NADP</scope>
    <scope>SUBUNIT</scope>
</reference>
<organism>
    <name type="scientific">Methanocaldococcus jannaschii (strain ATCC 43067 / DSM 2661 / JAL-1 / JCM 10045 / NBRC 100440)</name>
    <name type="common">Methanococcus jannaschii</name>
    <dbReference type="NCBI Taxonomy" id="243232"/>
    <lineage>
        <taxon>Archaea</taxon>
        <taxon>Methanobacteriati</taxon>
        <taxon>Methanobacteriota</taxon>
        <taxon>Methanomada group</taxon>
        <taxon>Methanococci</taxon>
        <taxon>Methanococcales</taxon>
        <taxon>Methanocaldococcaceae</taxon>
        <taxon>Methanocaldococcus</taxon>
    </lineage>
</organism>
<name>AROE_METJA</name>
<sequence>MINAKTKVIGLIGHPVEHSFSPIMHNAAFKDKGLNYVYVAFDVLPENLKYVIDGAKALGIVGFNVTIPHKIEIMKYLDEIDKDAQLIGAVNTIKIEDGKAIGYNTDGIGARMALEEEIGRVKDKNIVIYGAGGAARAVAFELAKDNNIIIANRTVEKAEALAKEIAEKLNKKFGEEVKFSGLDVDLDGVDIIINATPIGMYPNIDVEPIVKAEKLREDMVVMDLIYNPLETVLLKEAKKVNAKTINGLGMLIYQGAVAFKIWTGVEPNIEVMKNAIIDKITK</sequence>
<accession>Q58484</accession>
<comment type="function">
    <text evidence="1">Involved in the biosynthesis of the chorismate, which leads to the biosynthesis of aromatic amino acids. Catalyzes the reversible NADPH linked reduction of 3-dehydroshikimate (DHSA) to yield shikimate (SA).</text>
</comment>
<comment type="catalytic activity">
    <reaction evidence="1">
        <text>shikimate + NADP(+) = 3-dehydroshikimate + NADPH + H(+)</text>
        <dbReference type="Rhea" id="RHEA:17737"/>
        <dbReference type="ChEBI" id="CHEBI:15378"/>
        <dbReference type="ChEBI" id="CHEBI:16630"/>
        <dbReference type="ChEBI" id="CHEBI:36208"/>
        <dbReference type="ChEBI" id="CHEBI:57783"/>
        <dbReference type="ChEBI" id="CHEBI:58349"/>
        <dbReference type="EC" id="1.1.1.25"/>
    </reaction>
</comment>
<comment type="pathway">
    <text evidence="1">Metabolic intermediate biosynthesis; chorismate biosynthesis; chorismate from D-erythrose 4-phosphate and phosphoenolpyruvate: step 4/7.</text>
</comment>
<comment type="subunit">
    <text evidence="1 2">Homodimer.</text>
</comment>
<comment type="similarity">
    <text evidence="1">Belongs to the shikimate dehydrogenase family.</text>
</comment>
<gene>
    <name evidence="1" type="primary">aroE</name>
    <name type="ordered locus">MJ1084</name>
</gene>
<proteinExistence type="evidence at protein level"/>
<evidence type="ECO:0000255" key="1">
    <source>
        <dbReference type="HAMAP-Rule" id="MF_00222"/>
    </source>
</evidence>
<evidence type="ECO:0000269" key="2">
    <source>
    </source>
</evidence>
<evidence type="ECO:0007829" key="3">
    <source>
        <dbReference type="PDB" id="1NVT"/>
    </source>
</evidence>
<feature type="chain" id="PRO_0000136060" description="Shikimate dehydrogenase (NADP(+))">
    <location>
        <begin position="1"/>
        <end position="282"/>
    </location>
</feature>
<feature type="active site" description="Proton acceptor" evidence="1">
    <location>
        <position position="70"/>
    </location>
</feature>
<feature type="binding site" evidence="1">
    <location>
        <begin position="19"/>
        <end position="21"/>
    </location>
    <ligand>
        <name>shikimate</name>
        <dbReference type="ChEBI" id="CHEBI:36208"/>
    </ligand>
</feature>
<feature type="binding site" evidence="1">
    <location>
        <position position="66"/>
    </location>
    <ligand>
        <name>shikimate</name>
        <dbReference type="ChEBI" id="CHEBI:36208"/>
    </ligand>
</feature>
<feature type="binding site" evidence="1">
    <location>
        <position position="91"/>
    </location>
    <ligand>
        <name>shikimate</name>
        <dbReference type="ChEBI" id="CHEBI:36208"/>
    </ligand>
</feature>
<feature type="binding site" evidence="1">
    <location>
        <position position="106"/>
    </location>
    <ligand>
        <name>shikimate</name>
        <dbReference type="ChEBI" id="CHEBI:36208"/>
    </ligand>
</feature>
<feature type="binding site" evidence="1 2">
    <location>
        <begin position="130"/>
        <end position="134"/>
    </location>
    <ligand>
        <name>NADP(+)</name>
        <dbReference type="ChEBI" id="CHEBI:58349"/>
    </ligand>
</feature>
<feature type="binding site" evidence="1 2">
    <location>
        <begin position="152"/>
        <end position="157"/>
    </location>
    <ligand>
        <name>NADP(+)</name>
        <dbReference type="ChEBI" id="CHEBI:58349"/>
    </ligand>
</feature>
<feature type="binding site" evidence="1 2">
    <location>
        <position position="196"/>
    </location>
    <ligand>
        <name>NADP(+)</name>
        <dbReference type="ChEBI" id="CHEBI:58349"/>
    </ligand>
</feature>
<feature type="binding site" evidence="2">
    <location>
        <position position="200"/>
    </location>
    <ligand>
        <name>NADP(+)</name>
        <dbReference type="ChEBI" id="CHEBI:58349"/>
    </ligand>
</feature>
<feature type="binding site" evidence="2">
    <location>
        <position position="224"/>
    </location>
    <ligand>
        <name>NADP(+)</name>
        <dbReference type="ChEBI" id="CHEBI:58349"/>
    </ligand>
</feature>
<feature type="binding site" evidence="1">
    <location>
        <position position="226"/>
    </location>
    <ligand>
        <name>shikimate</name>
        <dbReference type="ChEBI" id="CHEBI:36208"/>
    </ligand>
</feature>
<feature type="binding site" evidence="1">
    <location>
        <position position="247"/>
    </location>
    <ligand>
        <name>NADP(+)</name>
        <dbReference type="ChEBI" id="CHEBI:58349"/>
    </ligand>
</feature>
<feature type="strand" evidence="3">
    <location>
        <begin position="7"/>
        <end position="15"/>
    </location>
</feature>
<feature type="helix" evidence="3">
    <location>
        <begin position="21"/>
        <end position="31"/>
    </location>
</feature>
<feature type="strand" evidence="3">
    <location>
        <begin position="36"/>
        <end position="42"/>
    </location>
</feature>
<feature type="helix" evidence="3">
    <location>
        <begin position="45"/>
        <end position="50"/>
    </location>
</feature>
<feature type="helix" evidence="3">
    <location>
        <begin position="51"/>
        <end position="58"/>
    </location>
</feature>
<feature type="strand" evidence="3">
    <location>
        <begin position="62"/>
        <end position="65"/>
    </location>
</feature>
<feature type="helix" evidence="3">
    <location>
        <begin position="72"/>
        <end position="76"/>
    </location>
</feature>
<feature type="strand" evidence="3">
    <location>
        <begin position="78"/>
        <end position="80"/>
    </location>
</feature>
<feature type="helix" evidence="3">
    <location>
        <begin position="82"/>
        <end position="87"/>
    </location>
</feature>
<feature type="strand" evidence="3">
    <location>
        <begin position="92"/>
        <end position="96"/>
    </location>
</feature>
<feature type="strand" evidence="3">
    <location>
        <begin position="99"/>
        <end position="103"/>
    </location>
</feature>
<feature type="helix" evidence="3">
    <location>
        <begin position="106"/>
        <end position="118"/>
    </location>
</feature>
<feature type="strand" evidence="3">
    <location>
        <begin position="125"/>
        <end position="129"/>
    </location>
</feature>
<feature type="helix" evidence="3">
    <location>
        <begin position="133"/>
        <end position="142"/>
    </location>
</feature>
<feature type="strand" evidence="3">
    <location>
        <begin position="144"/>
        <end position="151"/>
    </location>
</feature>
<feature type="helix" evidence="3">
    <location>
        <begin position="155"/>
        <end position="169"/>
    </location>
</feature>
<feature type="helix" evidence="3">
    <location>
        <begin position="173"/>
        <end position="176"/>
    </location>
</feature>
<feature type="strand" evidence="3">
    <location>
        <begin position="177"/>
        <end position="180"/>
    </location>
</feature>
<feature type="strand" evidence="3">
    <location>
        <begin position="191"/>
        <end position="194"/>
    </location>
</feature>
<feature type="strand" evidence="3">
    <location>
        <begin position="217"/>
        <end position="223"/>
    </location>
</feature>
<feature type="strand" evidence="3">
    <location>
        <begin position="227"/>
        <end position="230"/>
    </location>
</feature>
<feature type="helix" evidence="3">
    <location>
        <begin position="232"/>
        <end position="238"/>
    </location>
</feature>
<feature type="turn" evidence="3">
    <location>
        <begin position="239"/>
        <end position="241"/>
    </location>
</feature>
<feature type="strand" evidence="3">
    <location>
        <begin position="243"/>
        <end position="245"/>
    </location>
</feature>
<feature type="helix" evidence="3">
    <location>
        <begin position="248"/>
        <end position="263"/>
    </location>
</feature>
<feature type="helix" evidence="3">
    <location>
        <begin position="269"/>
        <end position="280"/>
    </location>
</feature>